<keyword id="KW-0997">Cell inner membrane</keyword>
<keyword id="KW-1003">Cell membrane</keyword>
<keyword id="KW-0350">Heme biosynthesis</keyword>
<keyword id="KW-0472">Membrane</keyword>
<keyword id="KW-1185">Reference proteome</keyword>
<keyword id="KW-0808">Transferase</keyword>
<keyword id="KW-0812">Transmembrane</keyword>
<keyword id="KW-1133">Transmembrane helix</keyword>
<protein>
    <recommendedName>
        <fullName evidence="1">Protoheme IX farnesyltransferase</fullName>
        <ecNumber evidence="1">2.5.1.141</ecNumber>
    </recommendedName>
    <alternativeName>
        <fullName evidence="1">Heme B farnesyltransferase</fullName>
    </alternativeName>
    <alternativeName>
        <fullName evidence="1">Heme O synthase</fullName>
    </alternativeName>
</protein>
<sequence>MVSSTPEMLQGGVTREQIVPSRKRIKLPAWLEIAKPRLIPLLLATTLGGMALSEGWPLPSLRLACTLGGGALAAAAAGVLNCIWEQDLDGRMQRTSGRALPSGRLSPTAAFIGAISCTLAAAALLVSGVNCLAAGLSLLGLCSYVLLYTAILKPRTPQNIVIGGVAGAIPPLVGAAAASGHVGLSGWWLFSLVMLWTPAHFWALALLLRDDYRAVGIPMLPVIQGPVVTVRAISRYGWATVLLSGFGVWALPEGGLLYGLLLIPFNARLLQMVHQLGAAPENVDRAKGLFRWSIFYMFGICLLLVVSRLPMAANFDLQAWSLLQQMASSGQFI</sequence>
<name>COXX_PROMM</name>
<accession>Q7V638</accession>
<gene>
    <name evidence="1" type="primary">ctaB</name>
    <name type="ordered locus">PMT_1339</name>
</gene>
<proteinExistence type="inferred from homology"/>
<dbReference type="EC" id="2.5.1.141" evidence="1"/>
<dbReference type="EMBL" id="BX548175">
    <property type="protein sequence ID" value="CAE21514.1"/>
    <property type="molecule type" value="Genomic_DNA"/>
</dbReference>
<dbReference type="RefSeq" id="WP_011130707.1">
    <property type="nucleotide sequence ID" value="NC_005071.1"/>
</dbReference>
<dbReference type="SMR" id="Q7V638"/>
<dbReference type="KEGG" id="pmt:PMT_1339"/>
<dbReference type="eggNOG" id="COG0109">
    <property type="taxonomic scope" value="Bacteria"/>
</dbReference>
<dbReference type="HOGENOM" id="CLU_029631_0_2_3"/>
<dbReference type="OrthoDB" id="9814417at2"/>
<dbReference type="UniPathway" id="UPA00834">
    <property type="reaction ID" value="UER00712"/>
</dbReference>
<dbReference type="Proteomes" id="UP000001423">
    <property type="component" value="Chromosome"/>
</dbReference>
<dbReference type="GO" id="GO:0005886">
    <property type="term" value="C:plasma membrane"/>
    <property type="evidence" value="ECO:0007669"/>
    <property type="project" value="UniProtKB-SubCell"/>
</dbReference>
<dbReference type="GO" id="GO:0008495">
    <property type="term" value="F:protoheme IX farnesyltransferase activity"/>
    <property type="evidence" value="ECO:0007669"/>
    <property type="project" value="UniProtKB-UniRule"/>
</dbReference>
<dbReference type="GO" id="GO:0048034">
    <property type="term" value="P:heme O biosynthetic process"/>
    <property type="evidence" value="ECO:0007669"/>
    <property type="project" value="UniProtKB-UniRule"/>
</dbReference>
<dbReference type="CDD" id="cd13957">
    <property type="entry name" value="PT_UbiA_Cox10"/>
    <property type="match status" value="1"/>
</dbReference>
<dbReference type="Gene3D" id="1.10.357.140">
    <property type="entry name" value="UbiA prenyltransferase"/>
    <property type="match status" value="1"/>
</dbReference>
<dbReference type="HAMAP" id="MF_00154">
    <property type="entry name" value="CyoE_CtaB"/>
    <property type="match status" value="1"/>
</dbReference>
<dbReference type="InterPro" id="IPR006369">
    <property type="entry name" value="Protohaem_IX_farnesylTrfase"/>
</dbReference>
<dbReference type="InterPro" id="IPR000537">
    <property type="entry name" value="UbiA_prenyltransferase"/>
</dbReference>
<dbReference type="InterPro" id="IPR030470">
    <property type="entry name" value="UbiA_prenylTrfase_CS"/>
</dbReference>
<dbReference type="InterPro" id="IPR044878">
    <property type="entry name" value="UbiA_sf"/>
</dbReference>
<dbReference type="NCBIfam" id="TIGR01473">
    <property type="entry name" value="cyoE_ctaB"/>
    <property type="match status" value="1"/>
</dbReference>
<dbReference type="NCBIfam" id="NF003349">
    <property type="entry name" value="PRK04375.1-2"/>
    <property type="match status" value="1"/>
</dbReference>
<dbReference type="PANTHER" id="PTHR43448:SF7">
    <property type="entry name" value="4-HYDROXYBENZOATE SOLANESYLTRANSFERASE"/>
    <property type="match status" value="1"/>
</dbReference>
<dbReference type="PANTHER" id="PTHR43448">
    <property type="entry name" value="PROTOHEME IX FARNESYLTRANSFERASE, MITOCHONDRIAL"/>
    <property type="match status" value="1"/>
</dbReference>
<dbReference type="Pfam" id="PF01040">
    <property type="entry name" value="UbiA"/>
    <property type="match status" value="1"/>
</dbReference>
<dbReference type="PROSITE" id="PS00943">
    <property type="entry name" value="UBIA"/>
    <property type="match status" value="1"/>
</dbReference>
<evidence type="ECO:0000255" key="1">
    <source>
        <dbReference type="HAMAP-Rule" id="MF_00154"/>
    </source>
</evidence>
<organism>
    <name type="scientific">Prochlorococcus marinus (strain MIT 9313)</name>
    <dbReference type="NCBI Taxonomy" id="74547"/>
    <lineage>
        <taxon>Bacteria</taxon>
        <taxon>Bacillati</taxon>
        <taxon>Cyanobacteriota</taxon>
        <taxon>Cyanophyceae</taxon>
        <taxon>Synechococcales</taxon>
        <taxon>Prochlorococcaceae</taxon>
        <taxon>Prochlorococcus</taxon>
    </lineage>
</organism>
<feature type="chain" id="PRO_0000327118" description="Protoheme IX farnesyltransferase">
    <location>
        <begin position="1"/>
        <end position="333"/>
    </location>
</feature>
<feature type="transmembrane region" description="Helical" evidence="1">
    <location>
        <begin position="63"/>
        <end position="83"/>
    </location>
</feature>
<feature type="transmembrane region" description="Helical" evidence="1">
    <location>
        <begin position="109"/>
        <end position="129"/>
    </location>
</feature>
<feature type="transmembrane region" description="Helical" evidence="1">
    <location>
        <begin position="132"/>
        <end position="152"/>
    </location>
</feature>
<feature type="transmembrane region" description="Helical" evidence="1">
    <location>
        <begin position="160"/>
        <end position="180"/>
    </location>
</feature>
<feature type="transmembrane region" description="Helical" evidence="1">
    <location>
        <begin position="188"/>
        <end position="208"/>
    </location>
</feature>
<feature type="transmembrane region" description="Helical" evidence="1">
    <location>
        <begin position="214"/>
        <end position="234"/>
    </location>
</feature>
<feature type="transmembrane region" description="Helical" evidence="1">
    <location>
        <begin position="245"/>
        <end position="265"/>
    </location>
</feature>
<feature type="transmembrane region" description="Helical" evidence="1">
    <location>
        <begin position="292"/>
        <end position="312"/>
    </location>
</feature>
<reference key="1">
    <citation type="journal article" date="2003" name="Nature">
        <title>Genome divergence in two Prochlorococcus ecotypes reflects oceanic niche differentiation.</title>
        <authorList>
            <person name="Rocap G."/>
            <person name="Larimer F.W."/>
            <person name="Lamerdin J.E."/>
            <person name="Malfatti S."/>
            <person name="Chain P."/>
            <person name="Ahlgren N.A."/>
            <person name="Arellano A."/>
            <person name="Coleman M."/>
            <person name="Hauser L."/>
            <person name="Hess W.R."/>
            <person name="Johnson Z.I."/>
            <person name="Land M.L."/>
            <person name="Lindell D."/>
            <person name="Post A.F."/>
            <person name="Regala W."/>
            <person name="Shah M."/>
            <person name="Shaw S.L."/>
            <person name="Steglich C."/>
            <person name="Sullivan M.B."/>
            <person name="Ting C.S."/>
            <person name="Tolonen A."/>
            <person name="Webb E.A."/>
            <person name="Zinser E.R."/>
            <person name="Chisholm S.W."/>
        </authorList>
    </citation>
    <scope>NUCLEOTIDE SEQUENCE [LARGE SCALE GENOMIC DNA]</scope>
    <source>
        <strain>MIT 9313</strain>
    </source>
</reference>
<comment type="function">
    <text evidence="1">Converts heme B (protoheme IX) to heme O by substitution of the vinyl group on carbon 2 of heme B porphyrin ring with a hydroxyethyl farnesyl side group.</text>
</comment>
<comment type="catalytic activity">
    <reaction evidence="1">
        <text>heme b + (2E,6E)-farnesyl diphosphate + H2O = Fe(II)-heme o + diphosphate</text>
        <dbReference type="Rhea" id="RHEA:28070"/>
        <dbReference type="ChEBI" id="CHEBI:15377"/>
        <dbReference type="ChEBI" id="CHEBI:33019"/>
        <dbReference type="ChEBI" id="CHEBI:60344"/>
        <dbReference type="ChEBI" id="CHEBI:60530"/>
        <dbReference type="ChEBI" id="CHEBI:175763"/>
        <dbReference type="EC" id="2.5.1.141"/>
    </reaction>
</comment>
<comment type="pathway">
    <text evidence="1">Porphyrin-containing compound metabolism; heme O biosynthesis; heme O from protoheme: step 1/1.</text>
</comment>
<comment type="subcellular location">
    <subcellularLocation>
        <location evidence="1">Cell inner membrane</location>
        <topology evidence="1">Multi-pass membrane protein</topology>
    </subcellularLocation>
</comment>
<comment type="miscellaneous">
    <text evidence="1">Carbon 2 of the heme B porphyrin ring is defined according to the Fischer nomenclature.</text>
</comment>
<comment type="similarity">
    <text evidence="1">Belongs to the UbiA prenyltransferase family. Protoheme IX farnesyltransferase subfamily.</text>
</comment>